<comment type="function">
    <text evidence="1">Promotes mitochondrial protein synthesis. May act as a fidelity factor of the translation reaction, by catalyzing a one-codon backward translocation of tRNAs on improperly translocated ribosomes. Binds to mitochondrial ribosomes in a GTP-dependent manner.</text>
</comment>
<comment type="catalytic activity">
    <reaction evidence="1">
        <text>GTP + H2O = GDP + phosphate + H(+)</text>
        <dbReference type="Rhea" id="RHEA:19669"/>
        <dbReference type="ChEBI" id="CHEBI:15377"/>
        <dbReference type="ChEBI" id="CHEBI:15378"/>
        <dbReference type="ChEBI" id="CHEBI:37565"/>
        <dbReference type="ChEBI" id="CHEBI:43474"/>
        <dbReference type="ChEBI" id="CHEBI:58189"/>
    </reaction>
</comment>
<comment type="subcellular location">
    <subcellularLocation>
        <location evidence="1">Mitochondrion inner membrane</location>
        <topology evidence="1">Peripheral membrane protein</topology>
        <orientation evidence="1">Matrix side</orientation>
    </subcellularLocation>
</comment>
<comment type="miscellaneous">
    <text evidence="1">This protein may be expected to contain an N-terminal transit peptide but none has been predicted.</text>
</comment>
<comment type="similarity">
    <text evidence="2">Belongs to the TRAFAC class translation factor GTPase superfamily. Classic translation factor GTPase family. LepA subfamily.</text>
</comment>
<dbReference type="EC" id="3.6.5.-"/>
<dbReference type="EMBL" id="CH408080">
    <property type="protein sequence ID" value="EEQ40424.1"/>
    <property type="molecule type" value="Genomic_DNA"/>
</dbReference>
<dbReference type="RefSeq" id="XP_002615670.1">
    <property type="nucleotide sequence ID" value="XM_002615624.1"/>
</dbReference>
<dbReference type="SMR" id="C4Y8M4"/>
<dbReference type="FunCoup" id="C4Y8M4">
    <property type="interactions" value="719"/>
</dbReference>
<dbReference type="STRING" id="306902.C4Y8M4"/>
<dbReference type="GeneID" id="8496486"/>
<dbReference type="KEGG" id="clu:CLUG_04552"/>
<dbReference type="VEuPathDB" id="FungiDB:CLUG_04552"/>
<dbReference type="HOGENOM" id="CLU_009995_3_1_1"/>
<dbReference type="InParanoid" id="C4Y8M4"/>
<dbReference type="OMA" id="QVKCDEN"/>
<dbReference type="OrthoDB" id="35348at4891"/>
<dbReference type="Proteomes" id="UP000007703">
    <property type="component" value="Unassembled WGS sequence"/>
</dbReference>
<dbReference type="GO" id="GO:0005743">
    <property type="term" value="C:mitochondrial inner membrane"/>
    <property type="evidence" value="ECO:0007669"/>
    <property type="project" value="UniProtKB-SubCell"/>
</dbReference>
<dbReference type="GO" id="GO:0005759">
    <property type="term" value="C:mitochondrial matrix"/>
    <property type="evidence" value="ECO:0007669"/>
    <property type="project" value="UniProtKB-UniRule"/>
</dbReference>
<dbReference type="GO" id="GO:0005525">
    <property type="term" value="F:GTP binding"/>
    <property type="evidence" value="ECO:0007669"/>
    <property type="project" value="UniProtKB-UniRule"/>
</dbReference>
<dbReference type="GO" id="GO:0003924">
    <property type="term" value="F:GTPase activity"/>
    <property type="evidence" value="ECO:0007669"/>
    <property type="project" value="UniProtKB-UniRule"/>
</dbReference>
<dbReference type="GO" id="GO:0097177">
    <property type="term" value="F:mitochondrial ribosome binding"/>
    <property type="evidence" value="ECO:0007669"/>
    <property type="project" value="TreeGrafter"/>
</dbReference>
<dbReference type="GO" id="GO:0045727">
    <property type="term" value="P:positive regulation of translation"/>
    <property type="evidence" value="ECO:0007669"/>
    <property type="project" value="UniProtKB-UniRule"/>
</dbReference>
<dbReference type="GO" id="GO:0006412">
    <property type="term" value="P:translation"/>
    <property type="evidence" value="ECO:0007669"/>
    <property type="project" value="UniProtKB-KW"/>
</dbReference>
<dbReference type="CDD" id="cd03699">
    <property type="entry name" value="EF4_II"/>
    <property type="match status" value="1"/>
</dbReference>
<dbReference type="CDD" id="cd16260">
    <property type="entry name" value="EF4_III"/>
    <property type="match status" value="1"/>
</dbReference>
<dbReference type="CDD" id="cd01890">
    <property type="entry name" value="LepA"/>
    <property type="match status" value="1"/>
</dbReference>
<dbReference type="CDD" id="cd03709">
    <property type="entry name" value="lepA_C"/>
    <property type="match status" value="1"/>
</dbReference>
<dbReference type="FunFam" id="3.40.50.300:FF:000078">
    <property type="entry name" value="Elongation factor 4"/>
    <property type="match status" value="1"/>
</dbReference>
<dbReference type="FunFam" id="2.40.30.10:FF:000015">
    <property type="entry name" value="Translation factor GUF1, mitochondrial"/>
    <property type="match status" value="1"/>
</dbReference>
<dbReference type="FunFam" id="3.30.70.240:FF:000007">
    <property type="entry name" value="Translation factor GUF1, mitochondrial"/>
    <property type="match status" value="1"/>
</dbReference>
<dbReference type="FunFam" id="3.30.70.2570:FF:000001">
    <property type="entry name" value="Translation factor GUF1, mitochondrial"/>
    <property type="match status" value="1"/>
</dbReference>
<dbReference type="FunFam" id="3.30.70.870:FF:000004">
    <property type="entry name" value="Translation factor GUF1, mitochondrial"/>
    <property type="match status" value="1"/>
</dbReference>
<dbReference type="Gene3D" id="3.30.70.240">
    <property type="match status" value="1"/>
</dbReference>
<dbReference type="Gene3D" id="3.30.70.2570">
    <property type="entry name" value="Elongation factor 4, C-terminal domain"/>
    <property type="match status" value="1"/>
</dbReference>
<dbReference type="Gene3D" id="3.30.70.870">
    <property type="entry name" value="Elongation Factor G (Translational Gtpase), domain 3"/>
    <property type="match status" value="1"/>
</dbReference>
<dbReference type="Gene3D" id="3.40.50.300">
    <property type="entry name" value="P-loop containing nucleotide triphosphate hydrolases"/>
    <property type="match status" value="1"/>
</dbReference>
<dbReference type="Gene3D" id="2.40.30.10">
    <property type="entry name" value="Translation factors"/>
    <property type="match status" value="1"/>
</dbReference>
<dbReference type="HAMAP" id="MF_00071">
    <property type="entry name" value="LepA"/>
    <property type="match status" value="1"/>
</dbReference>
<dbReference type="InterPro" id="IPR006297">
    <property type="entry name" value="EF-4"/>
</dbReference>
<dbReference type="InterPro" id="IPR035647">
    <property type="entry name" value="EFG_III/V"/>
</dbReference>
<dbReference type="InterPro" id="IPR000640">
    <property type="entry name" value="EFG_V-like"/>
</dbReference>
<dbReference type="InterPro" id="IPR004161">
    <property type="entry name" value="EFTu-like_2"/>
</dbReference>
<dbReference type="InterPro" id="IPR031157">
    <property type="entry name" value="G_TR_CS"/>
</dbReference>
<dbReference type="InterPro" id="IPR038363">
    <property type="entry name" value="LepA_C_sf"/>
</dbReference>
<dbReference type="InterPro" id="IPR013842">
    <property type="entry name" value="LepA_CTD"/>
</dbReference>
<dbReference type="InterPro" id="IPR035654">
    <property type="entry name" value="LepA_IV"/>
</dbReference>
<dbReference type="InterPro" id="IPR027417">
    <property type="entry name" value="P-loop_NTPase"/>
</dbReference>
<dbReference type="InterPro" id="IPR005225">
    <property type="entry name" value="Small_GTP-bd"/>
</dbReference>
<dbReference type="InterPro" id="IPR000795">
    <property type="entry name" value="T_Tr_GTP-bd_dom"/>
</dbReference>
<dbReference type="InterPro" id="IPR009000">
    <property type="entry name" value="Transl_B-barrel_sf"/>
</dbReference>
<dbReference type="NCBIfam" id="TIGR01393">
    <property type="entry name" value="lepA"/>
    <property type="match status" value="1"/>
</dbReference>
<dbReference type="NCBIfam" id="TIGR00231">
    <property type="entry name" value="small_GTP"/>
    <property type="match status" value="1"/>
</dbReference>
<dbReference type="PANTHER" id="PTHR43512:SF7">
    <property type="entry name" value="TRANSLATION FACTOR GUF1, MITOCHONDRIAL"/>
    <property type="match status" value="1"/>
</dbReference>
<dbReference type="PANTHER" id="PTHR43512">
    <property type="entry name" value="TRANSLATION FACTOR GUF1-RELATED"/>
    <property type="match status" value="1"/>
</dbReference>
<dbReference type="Pfam" id="PF00679">
    <property type="entry name" value="EFG_C"/>
    <property type="match status" value="1"/>
</dbReference>
<dbReference type="Pfam" id="PF00009">
    <property type="entry name" value="GTP_EFTU"/>
    <property type="match status" value="1"/>
</dbReference>
<dbReference type="Pfam" id="PF03144">
    <property type="entry name" value="GTP_EFTU_D2"/>
    <property type="match status" value="1"/>
</dbReference>
<dbReference type="Pfam" id="PF06421">
    <property type="entry name" value="LepA_C"/>
    <property type="match status" value="1"/>
</dbReference>
<dbReference type="PRINTS" id="PR00315">
    <property type="entry name" value="ELONGATNFCT"/>
</dbReference>
<dbReference type="SMART" id="SM00838">
    <property type="entry name" value="EFG_C"/>
    <property type="match status" value="1"/>
</dbReference>
<dbReference type="SUPFAM" id="SSF54980">
    <property type="entry name" value="EF-G C-terminal domain-like"/>
    <property type="match status" value="2"/>
</dbReference>
<dbReference type="SUPFAM" id="SSF52540">
    <property type="entry name" value="P-loop containing nucleoside triphosphate hydrolases"/>
    <property type="match status" value="1"/>
</dbReference>
<dbReference type="SUPFAM" id="SSF50447">
    <property type="entry name" value="Translation proteins"/>
    <property type="match status" value="1"/>
</dbReference>
<dbReference type="PROSITE" id="PS00301">
    <property type="entry name" value="G_TR_1"/>
    <property type="match status" value="1"/>
</dbReference>
<dbReference type="PROSITE" id="PS51722">
    <property type="entry name" value="G_TR_2"/>
    <property type="match status" value="1"/>
</dbReference>
<evidence type="ECO:0000255" key="1">
    <source>
        <dbReference type="HAMAP-Rule" id="MF_03137"/>
    </source>
</evidence>
<evidence type="ECO:0000305" key="2"/>
<feature type="chain" id="PRO_0000402882" description="Translation factor GUF1, mitochondrial">
    <location>
        <begin position="1"/>
        <end position="664"/>
    </location>
</feature>
<feature type="domain" description="tr-type G">
    <location>
        <begin position="63"/>
        <end position="246"/>
    </location>
</feature>
<feature type="binding site" evidence="1">
    <location>
        <begin position="72"/>
        <end position="79"/>
    </location>
    <ligand>
        <name>GTP</name>
        <dbReference type="ChEBI" id="CHEBI:37565"/>
    </ligand>
</feature>
<feature type="binding site" evidence="1">
    <location>
        <begin position="139"/>
        <end position="143"/>
    </location>
    <ligand>
        <name>GTP</name>
        <dbReference type="ChEBI" id="CHEBI:37565"/>
    </ligand>
</feature>
<feature type="binding site" evidence="1">
    <location>
        <begin position="193"/>
        <end position="196"/>
    </location>
    <ligand>
        <name>GTP</name>
        <dbReference type="ChEBI" id="CHEBI:37565"/>
    </ligand>
</feature>
<name>GUF1_CLAL4</name>
<keyword id="KW-0342">GTP-binding</keyword>
<keyword id="KW-0378">Hydrolase</keyword>
<keyword id="KW-0472">Membrane</keyword>
<keyword id="KW-0496">Mitochondrion</keyword>
<keyword id="KW-0999">Mitochondrion inner membrane</keyword>
<keyword id="KW-0547">Nucleotide-binding</keyword>
<keyword id="KW-0648">Protein biosynthesis</keyword>
<keyword id="KW-1185">Reference proteome</keyword>
<sequence length="664" mass="74656">MLHIRSWTLPKSSCSTLIWNRGFSKAPVLQVAKVIAVQDKKINLDREKHIQRIQERIEKIPISNYRNFSIVAHVDHGKSTLSDRLLELTGVIQPGAANKQVLDKLDVERERGITIKAQTCTMFYHDTNTKEDYLLHLVDTPGHVDFRAEVSRSYASCGGALLLVDAAQGVQAQTVANFYLAYSMGLKLIPIINKIDLDAADIPRAMDQVETTFELNREDCIPVSAKTGLNVENIIPSIINNIPPPQGDINKPLKALLVDSWHDPYVGVVMLVHIVDGKMKKGMKLLSAHTSKKYEVKEVGVMYPDKTPMDVLRAGQVGYIIPGMKNPREALIGDTFFQNGQHENLEPLPGFEEPKPMVFVGAFPADGGEFKVMNDHMENLVLNDRSVTLEKETSNALGLGWRLGFLGSLHASVFKERLEKEYGAKIILTAPTVPYKIVYKDGTEKVITNPDEFPGADQRALNIDHLMEPYVKAIMTIPDEYIGVVMSLCENNRGIQNEMEYLNTGQVLLKYELPLAQLVEDFFGKLKGATKGYASLDYEDSGYKKSDIVKMELCVSGIPQDALSQVMHRSQVQSRGKEYVARFKEYLKSQLFEVAIQAKVNNKVVARETIKAKRKDVTQRLHAADISRRKKLLERQKEGKKQMKASGRVHINHEAYQAFLRRSD</sequence>
<protein>
    <recommendedName>
        <fullName evidence="1">Translation factor GUF1, mitochondrial</fullName>
        <ecNumber>3.6.5.-</ecNumber>
    </recommendedName>
    <alternativeName>
        <fullName evidence="1">Elongation factor 4 homolog</fullName>
        <shortName evidence="1">EF-4</shortName>
    </alternativeName>
    <alternativeName>
        <fullName evidence="1">GTPase GUF1</fullName>
    </alternativeName>
    <alternativeName>
        <fullName evidence="1">Ribosomal back-translocase</fullName>
    </alternativeName>
</protein>
<accession>C4Y8M4</accession>
<proteinExistence type="inferred from homology"/>
<gene>
    <name evidence="1" type="primary">GUF1</name>
    <name type="ORF">CLUG_04552</name>
</gene>
<reference key="1">
    <citation type="journal article" date="2009" name="Nature">
        <title>Evolution of pathogenicity and sexual reproduction in eight Candida genomes.</title>
        <authorList>
            <person name="Butler G."/>
            <person name="Rasmussen M.D."/>
            <person name="Lin M.F."/>
            <person name="Santos M.A.S."/>
            <person name="Sakthikumar S."/>
            <person name="Munro C.A."/>
            <person name="Rheinbay E."/>
            <person name="Grabherr M."/>
            <person name="Forche A."/>
            <person name="Reedy J.L."/>
            <person name="Agrafioti I."/>
            <person name="Arnaud M.B."/>
            <person name="Bates S."/>
            <person name="Brown A.J.P."/>
            <person name="Brunke S."/>
            <person name="Costanzo M.C."/>
            <person name="Fitzpatrick D.A."/>
            <person name="de Groot P.W.J."/>
            <person name="Harris D."/>
            <person name="Hoyer L.L."/>
            <person name="Hube B."/>
            <person name="Klis F.M."/>
            <person name="Kodira C."/>
            <person name="Lennard N."/>
            <person name="Logue M.E."/>
            <person name="Martin R."/>
            <person name="Neiman A.M."/>
            <person name="Nikolaou E."/>
            <person name="Quail M.A."/>
            <person name="Quinn J."/>
            <person name="Santos M.C."/>
            <person name="Schmitzberger F.F."/>
            <person name="Sherlock G."/>
            <person name="Shah P."/>
            <person name="Silverstein K.A.T."/>
            <person name="Skrzypek M.S."/>
            <person name="Soll D."/>
            <person name="Staggs R."/>
            <person name="Stansfield I."/>
            <person name="Stumpf M.P.H."/>
            <person name="Sudbery P.E."/>
            <person name="Srikantha T."/>
            <person name="Zeng Q."/>
            <person name="Berman J."/>
            <person name="Berriman M."/>
            <person name="Heitman J."/>
            <person name="Gow N.A.R."/>
            <person name="Lorenz M.C."/>
            <person name="Birren B.W."/>
            <person name="Kellis M."/>
            <person name="Cuomo C.A."/>
        </authorList>
    </citation>
    <scope>NUCLEOTIDE SEQUENCE [LARGE SCALE GENOMIC DNA]</scope>
    <source>
        <strain>ATCC 42720</strain>
    </source>
</reference>
<organism>
    <name type="scientific">Clavispora lusitaniae (strain ATCC 42720)</name>
    <name type="common">Yeast</name>
    <name type="synonym">Candida lusitaniae</name>
    <dbReference type="NCBI Taxonomy" id="306902"/>
    <lineage>
        <taxon>Eukaryota</taxon>
        <taxon>Fungi</taxon>
        <taxon>Dikarya</taxon>
        <taxon>Ascomycota</taxon>
        <taxon>Saccharomycotina</taxon>
        <taxon>Pichiomycetes</taxon>
        <taxon>Metschnikowiaceae</taxon>
        <taxon>Clavispora</taxon>
    </lineage>
</organism>